<keyword id="KW-0030">Aminoacyl-tRNA synthetase</keyword>
<keyword id="KW-0067">ATP-binding</keyword>
<keyword id="KW-0963">Cytoplasm</keyword>
<keyword id="KW-0436">Ligase</keyword>
<keyword id="KW-0479">Metal-binding</keyword>
<keyword id="KW-0547">Nucleotide-binding</keyword>
<keyword id="KW-0648">Protein biosynthesis</keyword>
<keyword id="KW-1185">Reference proteome</keyword>
<keyword id="KW-0862">Zinc</keyword>
<comment type="catalytic activity">
    <reaction evidence="1">
        <text>tRNA(Cys) + L-cysteine + ATP = L-cysteinyl-tRNA(Cys) + AMP + diphosphate</text>
        <dbReference type="Rhea" id="RHEA:17773"/>
        <dbReference type="Rhea" id="RHEA-COMP:9661"/>
        <dbReference type="Rhea" id="RHEA-COMP:9679"/>
        <dbReference type="ChEBI" id="CHEBI:30616"/>
        <dbReference type="ChEBI" id="CHEBI:33019"/>
        <dbReference type="ChEBI" id="CHEBI:35235"/>
        <dbReference type="ChEBI" id="CHEBI:78442"/>
        <dbReference type="ChEBI" id="CHEBI:78517"/>
        <dbReference type="ChEBI" id="CHEBI:456215"/>
        <dbReference type="EC" id="6.1.1.16"/>
    </reaction>
</comment>
<comment type="cofactor">
    <cofactor evidence="1">
        <name>Zn(2+)</name>
        <dbReference type="ChEBI" id="CHEBI:29105"/>
    </cofactor>
    <text evidence="1">Binds 1 zinc ion per subunit.</text>
</comment>
<comment type="subunit">
    <text evidence="1">Monomer.</text>
</comment>
<comment type="subcellular location">
    <subcellularLocation>
        <location evidence="1">Cytoplasm</location>
    </subcellularLocation>
</comment>
<comment type="similarity">
    <text evidence="1">Belongs to the class-I aminoacyl-tRNA synthetase family.</text>
</comment>
<comment type="sequence caution" evidence="2">
    <conflict type="erroneous initiation">
        <sequence resource="EMBL-CDS" id="BAC09379"/>
    </conflict>
</comment>
<feature type="chain" id="PRO_0000159502" description="Cysteine--tRNA ligase">
    <location>
        <begin position="1"/>
        <end position="486"/>
    </location>
</feature>
<feature type="short sequence motif" description="'HIGH' region">
    <location>
        <begin position="31"/>
        <end position="41"/>
    </location>
</feature>
<feature type="short sequence motif" description="'KMSKS' region">
    <location>
        <begin position="274"/>
        <end position="278"/>
    </location>
</feature>
<feature type="binding site" evidence="1">
    <location>
        <position position="29"/>
    </location>
    <ligand>
        <name>Zn(2+)</name>
        <dbReference type="ChEBI" id="CHEBI:29105"/>
    </ligand>
</feature>
<feature type="binding site" evidence="1">
    <location>
        <position position="217"/>
    </location>
    <ligand>
        <name>Zn(2+)</name>
        <dbReference type="ChEBI" id="CHEBI:29105"/>
    </ligand>
</feature>
<feature type="binding site" evidence="1">
    <location>
        <position position="242"/>
    </location>
    <ligand>
        <name>Zn(2+)</name>
        <dbReference type="ChEBI" id="CHEBI:29105"/>
    </ligand>
</feature>
<feature type="binding site" evidence="1">
    <location>
        <position position="246"/>
    </location>
    <ligand>
        <name>Zn(2+)</name>
        <dbReference type="ChEBI" id="CHEBI:29105"/>
    </ligand>
</feature>
<feature type="binding site" evidence="1">
    <location>
        <position position="277"/>
    </location>
    <ligand>
        <name>ATP</name>
        <dbReference type="ChEBI" id="CHEBI:30616"/>
    </ligand>
</feature>
<gene>
    <name evidence="1" type="primary">cysS</name>
    <name type="ordered locus">tlr1827</name>
</gene>
<organism>
    <name type="scientific">Thermosynechococcus vestitus (strain NIES-2133 / IAM M-273 / BP-1)</name>
    <dbReference type="NCBI Taxonomy" id="197221"/>
    <lineage>
        <taxon>Bacteria</taxon>
        <taxon>Bacillati</taxon>
        <taxon>Cyanobacteriota</taxon>
        <taxon>Cyanophyceae</taxon>
        <taxon>Acaryochloridales</taxon>
        <taxon>Thermosynechococcaceae</taxon>
        <taxon>Thermosynechococcus</taxon>
    </lineage>
</organism>
<protein>
    <recommendedName>
        <fullName evidence="1">Cysteine--tRNA ligase</fullName>
        <ecNumber evidence="1">6.1.1.16</ecNumber>
    </recommendedName>
    <alternativeName>
        <fullName evidence="1">Cysteinyl-tRNA synthetase</fullName>
        <shortName evidence="1">CysRS</shortName>
    </alternativeName>
</protein>
<proteinExistence type="inferred from homology"/>
<name>SYC_THEVB</name>
<reference key="1">
    <citation type="journal article" date="2002" name="DNA Res.">
        <title>Complete genome structure of the thermophilic cyanobacterium Thermosynechococcus elongatus BP-1.</title>
        <authorList>
            <person name="Nakamura Y."/>
            <person name="Kaneko T."/>
            <person name="Sato S."/>
            <person name="Ikeuchi M."/>
            <person name="Katoh H."/>
            <person name="Sasamoto S."/>
            <person name="Watanabe A."/>
            <person name="Iriguchi M."/>
            <person name="Kawashima K."/>
            <person name="Kimura T."/>
            <person name="Kishida Y."/>
            <person name="Kiyokawa C."/>
            <person name="Kohara M."/>
            <person name="Matsumoto M."/>
            <person name="Matsuno A."/>
            <person name="Nakazaki N."/>
            <person name="Shimpo S."/>
            <person name="Sugimoto M."/>
            <person name="Takeuchi C."/>
            <person name="Yamada M."/>
            <person name="Tabata S."/>
        </authorList>
    </citation>
    <scope>NUCLEOTIDE SEQUENCE [LARGE SCALE GENOMIC DNA]</scope>
    <source>
        <strain>NIES-2133 / IAM M-273 / BP-1</strain>
    </source>
</reference>
<sequence length="486" mass="54694">MPLHLYNTLSRRLEPFSPLHPERVTIYACGVTVYDYCHLGHARSYVAWDVLRRYLTFLGYTVHYVQNFTDIDDKILRRAYENGETMATVSDRYIAAYHQDMAALNILPASAYPRATEVIPEIINLIQGLLDRGYAYVAGGDVYYAVAQFPSYGKLSGRQLEQLMAGASGRIEEEEEQRKRHPLDFALWKAAKPEEMSVYHPWEAPWGKGRPGWHIECSAMVRQAFGATVDIHCGGMDLIFPHHENEIAQSEAVTQQPLARFWLHNGFVTVNTEKMSKSLGNFTTIRDLLAQGLDPMALRLLVLQAQYRKPLDFTPEALTAAAKGWQTLGEALHLHQQIPLPPIDAAEVRSHPKTEAFCQAMDEDLNTAAALAVIFELAKTLNREQHRYLHGGGWGRSPAEVSRDWHTLVTLAQVLGLEAKEESNPALTVELTDEEIQALIAARTAARQAKNYTESDRLRDLLLAQGVKLVDQKDGTTHWFRVPSAP</sequence>
<evidence type="ECO:0000255" key="1">
    <source>
        <dbReference type="HAMAP-Rule" id="MF_00041"/>
    </source>
</evidence>
<evidence type="ECO:0000305" key="2"/>
<accession>Q8DHW6</accession>
<dbReference type="EC" id="6.1.1.16" evidence="1"/>
<dbReference type="EMBL" id="BA000039">
    <property type="protein sequence ID" value="BAC09379.1"/>
    <property type="status" value="ALT_INIT"/>
    <property type="molecule type" value="Genomic_DNA"/>
</dbReference>
<dbReference type="RefSeq" id="NP_682617.1">
    <property type="nucleotide sequence ID" value="NC_004113.1"/>
</dbReference>
<dbReference type="RefSeq" id="WP_164920936.1">
    <property type="nucleotide sequence ID" value="NC_004113.1"/>
</dbReference>
<dbReference type="SMR" id="Q8DHW6"/>
<dbReference type="STRING" id="197221.gene:10748432"/>
<dbReference type="EnsemblBacteria" id="BAC09379">
    <property type="protein sequence ID" value="BAC09379"/>
    <property type="gene ID" value="BAC09379"/>
</dbReference>
<dbReference type="KEGG" id="tel:tlr1827"/>
<dbReference type="PATRIC" id="fig|197221.4.peg.1910"/>
<dbReference type="eggNOG" id="COG0215">
    <property type="taxonomic scope" value="Bacteria"/>
</dbReference>
<dbReference type="Proteomes" id="UP000000440">
    <property type="component" value="Chromosome"/>
</dbReference>
<dbReference type="GO" id="GO:0005829">
    <property type="term" value="C:cytosol"/>
    <property type="evidence" value="ECO:0007669"/>
    <property type="project" value="TreeGrafter"/>
</dbReference>
<dbReference type="GO" id="GO:0005524">
    <property type="term" value="F:ATP binding"/>
    <property type="evidence" value="ECO:0007669"/>
    <property type="project" value="UniProtKB-UniRule"/>
</dbReference>
<dbReference type="GO" id="GO:0004817">
    <property type="term" value="F:cysteine-tRNA ligase activity"/>
    <property type="evidence" value="ECO:0007669"/>
    <property type="project" value="UniProtKB-UniRule"/>
</dbReference>
<dbReference type="GO" id="GO:0008270">
    <property type="term" value="F:zinc ion binding"/>
    <property type="evidence" value="ECO:0007669"/>
    <property type="project" value="UniProtKB-UniRule"/>
</dbReference>
<dbReference type="GO" id="GO:0006423">
    <property type="term" value="P:cysteinyl-tRNA aminoacylation"/>
    <property type="evidence" value="ECO:0007669"/>
    <property type="project" value="UniProtKB-UniRule"/>
</dbReference>
<dbReference type="CDD" id="cd00672">
    <property type="entry name" value="CysRS_core"/>
    <property type="match status" value="1"/>
</dbReference>
<dbReference type="FunFam" id="3.40.50.620:FF:000009">
    <property type="entry name" value="Cysteine--tRNA ligase"/>
    <property type="match status" value="1"/>
</dbReference>
<dbReference type="Gene3D" id="1.20.120.1910">
    <property type="entry name" value="Cysteine-tRNA ligase, C-terminal anti-codon recognition domain"/>
    <property type="match status" value="1"/>
</dbReference>
<dbReference type="Gene3D" id="3.40.50.620">
    <property type="entry name" value="HUPs"/>
    <property type="match status" value="1"/>
</dbReference>
<dbReference type="HAMAP" id="MF_00041">
    <property type="entry name" value="Cys_tRNA_synth"/>
    <property type="match status" value="1"/>
</dbReference>
<dbReference type="InterPro" id="IPR015803">
    <property type="entry name" value="Cys-tRNA-ligase"/>
</dbReference>
<dbReference type="InterPro" id="IPR015273">
    <property type="entry name" value="Cys-tRNA-synt_Ia_DALR"/>
</dbReference>
<dbReference type="InterPro" id="IPR024909">
    <property type="entry name" value="Cys-tRNA/MSH_ligase"/>
</dbReference>
<dbReference type="InterPro" id="IPR014729">
    <property type="entry name" value="Rossmann-like_a/b/a_fold"/>
</dbReference>
<dbReference type="InterPro" id="IPR032678">
    <property type="entry name" value="tRNA-synt_1_cat_dom"/>
</dbReference>
<dbReference type="InterPro" id="IPR009080">
    <property type="entry name" value="tRNAsynth_Ia_anticodon-bd"/>
</dbReference>
<dbReference type="NCBIfam" id="TIGR00435">
    <property type="entry name" value="cysS"/>
    <property type="match status" value="1"/>
</dbReference>
<dbReference type="PANTHER" id="PTHR10890:SF3">
    <property type="entry name" value="CYSTEINE--TRNA LIGASE, CYTOPLASMIC"/>
    <property type="match status" value="1"/>
</dbReference>
<dbReference type="PANTHER" id="PTHR10890">
    <property type="entry name" value="CYSTEINYL-TRNA SYNTHETASE"/>
    <property type="match status" value="1"/>
</dbReference>
<dbReference type="Pfam" id="PF09190">
    <property type="entry name" value="DALR_2"/>
    <property type="match status" value="1"/>
</dbReference>
<dbReference type="Pfam" id="PF01406">
    <property type="entry name" value="tRNA-synt_1e"/>
    <property type="match status" value="1"/>
</dbReference>
<dbReference type="PRINTS" id="PR00983">
    <property type="entry name" value="TRNASYNTHCYS"/>
</dbReference>
<dbReference type="SMART" id="SM00840">
    <property type="entry name" value="DALR_2"/>
    <property type="match status" value="1"/>
</dbReference>
<dbReference type="SUPFAM" id="SSF47323">
    <property type="entry name" value="Anticodon-binding domain of a subclass of class I aminoacyl-tRNA synthetases"/>
    <property type="match status" value="1"/>
</dbReference>
<dbReference type="SUPFAM" id="SSF52374">
    <property type="entry name" value="Nucleotidylyl transferase"/>
    <property type="match status" value="1"/>
</dbReference>